<feature type="chain" id="PRO_1000093069" description="S-adenosylmethionine synthase">
    <location>
        <begin position="1"/>
        <end position="401"/>
    </location>
</feature>
<feature type="region of interest" description="Flexible loop" evidence="1">
    <location>
        <begin position="104"/>
        <end position="114"/>
    </location>
</feature>
<feature type="binding site" description="in other chain" evidence="1">
    <location>
        <position position="15"/>
    </location>
    <ligand>
        <name>ATP</name>
        <dbReference type="ChEBI" id="CHEBI:30616"/>
        <note>ligand shared between two neighboring subunits</note>
    </ligand>
</feature>
<feature type="binding site" evidence="1">
    <location>
        <position position="17"/>
    </location>
    <ligand>
        <name>Mg(2+)</name>
        <dbReference type="ChEBI" id="CHEBI:18420"/>
    </ligand>
</feature>
<feature type="binding site" evidence="1">
    <location>
        <position position="48"/>
    </location>
    <ligand>
        <name>K(+)</name>
        <dbReference type="ChEBI" id="CHEBI:29103"/>
    </ligand>
</feature>
<feature type="binding site" description="in other chain" evidence="1">
    <location>
        <position position="61"/>
    </location>
    <ligand>
        <name>L-methionine</name>
        <dbReference type="ChEBI" id="CHEBI:57844"/>
        <note>ligand shared between two neighboring subunits</note>
    </ligand>
</feature>
<feature type="binding site" description="in other chain" evidence="1">
    <location>
        <position position="104"/>
    </location>
    <ligand>
        <name>L-methionine</name>
        <dbReference type="ChEBI" id="CHEBI:57844"/>
        <note>ligand shared between two neighboring subunits</note>
    </ligand>
</feature>
<feature type="binding site" description="in other chain" evidence="1">
    <location>
        <begin position="179"/>
        <end position="181"/>
    </location>
    <ligand>
        <name>ATP</name>
        <dbReference type="ChEBI" id="CHEBI:30616"/>
        <note>ligand shared between two neighboring subunits</note>
    </ligand>
</feature>
<feature type="binding site" description="in other chain" evidence="1">
    <location>
        <begin position="246"/>
        <end position="247"/>
    </location>
    <ligand>
        <name>ATP</name>
        <dbReference type="ChEBI" id="CHEBI:30616"/>
        <note>ligand shared between two neighboring subunits</note>
    </ligand>
</feature>
<feature type="binding site" evidence="1">
    <location>
        <position position="255"/>
    </location>
    <ligand>
        <name>ATP</name>
        <dbReference type="ChEBI" id="CHEBI:30616"/>
        <note>ligand shared between two neighboring subunits</note>
    </ligand>
</feature>
<feature type="binding site" evidence="1">
    <location>
        <position position="255"/>
    </location>
    <ligand>
        <name>L-methionine</name>
        <dbReference type="ChEBI" id="CHEBI:57844"/>
        <note>ligand shared between two neighboring subunits</note>
    </ligand>
</feature>
<feature type="binding site" description="in other chain" evidence="1">
    <location>
        <begin position="261"/>
        <end position="262"/>
    </location>
    <ligand>
        <name>ATP</name>
        <dbReference type="ChEBI" id="CHEBI:30616"/>
        <note>ligand shared between two neighboring subunits</note>
    </ligand>
</feature>
<feature type="binding site" evidence="1">
    <location>
        <position position="278"/>
    </location>
    <ligand>
        <name>ATP</name>
        <dbReference type="ChEBI" id="CHEBI:30616"/>
        <note>ligand shared between two neighboring subunits</note>
    </ligand>
</feature>
<feature type="binding site" evidence="1">
    <location>
        <position position="282"/>
    </location>
    <ligand>
        <name>ATP</name>
        <dbReference type="ChEBI" id="CHEBI:30616"/>
        <note>ligand shared between two neighboring subunits</note>
    </ligand>
</feature>
<feature type="binding site" description="in other chain" evidence="1">
    <location>
        <position position="286"/>
    </location>
    <ligand>
        <name>L-methionine</name>
        <dbReference type="ChEBI" id="CHEBI:57844"/>
        <note>ligand shared between two neighboring subunits</note>
    </ligand>
</feature>
<protein>
    <recommendedName>
        <fullName evidence="1">S-adenosylmethionine synthase</fullName>
        <shortName evidence="1">AdoMet synthase</shortName>
        <ecNumber evidence="1">2.5.1.6</ecNumber>
    </recommendedName>
    <alternativeName>
        <fullName evidence="1">MAT</fullName>
    </alternativeName>
    <alternativeName>
        <fullName evidence="1">Methionine adenosyltransferase</fullName>
    </alternativeName>
</protein>
<comment type="function">
    <text evidence="1">Catalyzes the formation of S-adenosylmethionine (AdoMet) from methionine and ATP. The overall synthetic reaction is composed of two sequential steps, AdoMet formation and the subsequent tripolyphosphate hydrolysis which occurs prior to release of AdoMet from the enzyme.</text>
</comment>
<comment type="catalytic activity">
    <reaction evidence="1">
        <text>L-methionine + ATP + H2O = S-adenosyl-L-methionine + phosphate + diphosphate</text>
        <dbReference type="Rhea" id="RHEA:21080"/>
        <dbReference type="ChEBI" id="CHEBI:15377"/>
        <dbReference type="ChEBI" id="CHEBI:30616"/>
        <dbReference type="ChEBI" id="CHEBI:33019"/>
        <dbReference type="ChEBI" id="CHEBI:43474"/>
        <dbReference type="ChEBI" id="CHEBI:57844"/>
        <dbReference type="ChEBI" id="CHEBI:59789"/>
        <dbReference type="EC" id="2.5.1.6"/>
    </reaction>
</comment>
<comment type="cofactor">
    <cofactor evidence="1">
        <name>Mg(2+)</name>
        <dbReference type="ChEBI" id="CHEBI:18420"/>
    </cofactor>
    <text evidence="1">Binds 2 divalent ions per subunit.</text>
</comment>
<comment type="cofactor">
    <cofactor evidence="1">
        <name>K(+)</name>
        <dbReference type="ChEBI" id="CHEBI:29103"/>
    </cofactor>
    <text evidence="1">Binds 1 potassium ion per subunit.</text>
</comment>
<comment type="pathway">
    <text evidence="1">Amino-acid biosynthesis; S-adenosyl-L-methionine biosynthesis; S-adenosyl-L-methionine from L-methionine: step 1/1.</text>
</comment>
<comment type="subunit">
    <text evidence="1">Homotetramer; dimer of dimers.</text>
</comment>
<comment type="subcellular location">
    <subcellularLocation>
        <location evidence="1">Cytoplasm</location>
    </subcellularLocation>
</comment>
<comment type="similarity">
    <text evidence="1">Belongs to the AdoMet synthase family.</text>
</comment>
<keyword id="KW-0067">ATP-binding</keyword>
<keyword id="KW-0963">Cytoplasm</keyword>
<keyword id="KW-0460">Magnesium</keyword>
<keyword id="KW-0479">Metal-binding</keyword>
<keyword id="KW-0547">Nucleotide-binding</keyword>
<keyword id="KW-0554">One-carbon metabolism</keyword>
<keyword id="KW-0630">Potassium</keyword>
<keyword id="KW-0808">Transferase</keyword>
<dbReference type="EC" id="2.5.1.6" evidence="1"/>
<dbReference type="EMBL" id="CP000879">
    <property type="protein sequence ID" value="ABX32087.1"/>
    <property type="molecule type" value="Genomic_DNA"/>
</dbReference>
<dbReference type="SMR" id="A9BHX2"/>
<dbReference type="STRING" id="403833.Pmob_1383"/>
<dbReference type="KEGG" id="pmo:Pmob_1383"/>
<dbReference type="eggNOG" id="COG0192">
    <property type="taxonomic scope" value="Bacteria"/>
</dbReference>
<dbReference type="HOGENOM" id="CLU_041802_1_1_0"/>
<dbReference type="UniPathway" id="UPA00315">
    <property type="reaction ID" value="UER00080"/>
</dbReference>
<dbReference type="Proteomes" id="UP000000789">
    <property type="component" value="Chromosome"/>
</dbReference>
<dbReference type="GO" id="GO:0005737">
    <property type="term" value="C:cytoplasm"/>
    <property type="evidence" value="ECO:0007669"/>
    <property type="project" value="UniProtKB-SubCell"/>
</dbReference>
<dbReference type="GO" id="GO:0005524">
    <property type="term" value="F:ATP binding"/>
    <property type="evidence" value="ECO:0007669"/>
    <property type="project" value="UniProtKB-UniRule"/>
</dbReference>
<dbReference type="GO" id="GO:0000287">
    <property type="term" value="F:magnesium ion binding"/>
    <property type="evidence" value="ECO:0007669"/>
    <property type="project" value="UniProtKB-UniRule"/>
</dbReference>
<dbReference type="GO" id="GO:0004478">
    <property type="term" value="F:methionine adenosyltransferase activity"/>
    <property type="evidence" value="ECO:0007669"/>
    <property type="project" value="UniProtKB-UniRule"/>
</dbReference>
<dbReference type="GO" id="GO:0006730">
    <property type="term" value="P:one-carbon metabolic process"/>
    <property type="evidence" value="ECO:0007669"/>
    <property type="project" value="UniProtKB-KW"/>
</dbReference>
<dbReference type="GO" id="GO:0006556">
    <property type="term" value="P:S-adenosylmethionine biosynthetic process"/>
    <property type="evidence" value="ECO:0007669"/>
    <property type="project" value="UniProtKB-UniRule"/>
</dbReference>
<dbReference type="CDD" id="cd18079">
    <property type="entry name" value="S-AdoMet_synt"/>
    <property type="match status" value="1"/>
</dbReference>
<dbReference type="FunFam" id="3.30.300.10:FF:000003">
    <property type="entry name" value="S-adenosylmethionine synthase"/>
    <property type="match status" value="1"/>
</dbReference>
<dbReference type="FunFam" id="3.30.300.10:FF:000004">
    <property type="entry name" value="S-adenosylmethionine synthase"/>
    <property type="match status" value="1"/>
</dbReference>
<dbReference type="Gene3D" id="3.30.300.10">
    <property type="match status" value="3"/>
</dbReference>
<dbReference type="HAMAP" id="MF_00086">
    <property type="entry name" value="S_AdoMet_synth1"/>
    <property type="match status" value="1"/>
</dbReference>
<dbReference type="InterPro" id="IPR022631">
    <property type="entry name" value="ADOMET_SYNTHASE_CS"/>
</dbReference>
<dbReference type="InterPro" id="IPR022630">
    <property type="entry name" value="S-AdoMet_synt_C"/>
</dbReference>
<dbReference type="InterPro" id="IPR022629">
    <property type="entry name" value="S-AdoMet_synt_central"/>
</dbReference>
<dbReference type="InterPro" id="IPR022628">
    <property type="entry name" value="S-AdoMet_synt_N"/>
</dbReference>
<dbReference type="InterPro" id="IPR002133">
    <property type="entry name" value="S-AdoMet_synthetase"/>
</dbReference>
<dbReference type="InterPro" id="IPR022636">
    <property type="entry name" value="S-AdoMet_synthetase_sfam"/>
</dbReference>
<dbReference type="NCBIfam" id="TIGR01034">
    <property type="entry name" value="metK"/>
    <property type="match status" value="1"/>
</dbReference>
<dbReference type="PANTHER" id="PTHR11964">
    <property type="entry name" value="S-ADENOSYLMETHIONINE SYNTHETASE"/>
    <property type="match status" value="1"/>
</dbReference>
<dbReference type="Pfam" id="PF02773">
    <property type="entry name" value="S-AdoMet_synt_C"/>
    <property type="match status" value="1"/>
</dbReference>
<dbReference type="Pfam" id="PF02772">
    <property type="entry name" value="S-AdoMet_synt_M"/>
    <property type="match status" value="1"/>
</dbReference>
<dbReference type="Pfam" id="PF00438">
    <property type="entry name" value="S-AdoMet_synt_N"/>
    <property type="match status" value="1"/>
</dbReference>
<dbReference type="PIRSF" id="PIRSF000497">
    <property type="entry name" value="MAT"/>
    <property type="match status" value="1"/>
</dbReference>
<dbReference type="SUPFAM" id="SSF55973">
    <property type="entry name" value="S-adenosylmethionine synthetase"/>
    <property type="match status" value="3"/>
</dbReference>
<dbReference type="PROSITE" id="PS00376">
    <property type="entry name" value="ADOMET_SYNTHASE_1"/>
    <property type="match status" value="1"/>
</dbReference>
<dbReference type="PROSITE" id="PS00377">
    <property type="entry name" value="ADOMET_SYNTHASE_2"/>
    <property type="match status" value="1"/>
</dbReference>
<evidence type="ECO:0000255" key="1">
    <source>
        <dbReference type="HAMAP-Rule" id="MF_00086"/>
    </source>
</evidence>
<reference key="1">
    <citation type="submission" date="2007-11" db="EMBL/GenBank/DDBJ databases">
        <title>Complete sequence of Petroga mobilis SJ95.</title>
        <authorList>
            <consortium name="US DOE Joint Genome Institute"/>
            <person name="Copeland A."/>
            <person name="Lucas S."/>
            <person name="Lapidus A."/>
            <person name="Barry K."/>
            <person name="Glavina del Rio T."/>
            <person name="Dalin E."/>
            <person name="Tice H."/>
            <person name="Pitluck S."/>
            <person name="Meincke L."/>
            <person name="Brettin T."/>
            <person name="Bruce D."/>
            <person name="Detter J.C."/>
            <person name="Han C."/>
            <person name="Kuske C.R."/>
            <person name="Schmutz J."/>
            <person name="Larimer F."/>
            <person name="Land M."/>
            <person name="Hauser L."/>
            <person name="Kyrpides N."/>
            <person name="Mikhailova N."/>
            <person name="Noll K."/>
            <person name="Richardson P."/>
        </authorList>
    </citation>
    <scope>NUCLEOTIDE SEQUENCE [LARGE SCALE GENOMIC DNA]</scope>
    <source>
        <strain>DSM 10674 / SJ95</strain>
    </source>
</reference>
<organism>
    <name type="scientific">Petrotoga mobilis (strain DSM 10674 / SJ95)</name>
    <dbReference type="NCBI Taxonomy" id="403833"/>
    <lineage>
        <taxon>Bacteria</taxon>
        <taxon>Thermotogati</taxon>
        <taxon>Thermotogota</taxon>
        <taxon>Thermotogae</taxon>
        <taxon>Petrotogales</taxon>
        <taxon>Petrotogaceae</taxon>
        <taxon>Petrotoga</taxon>
    </lineage>
</organism>
<proteinExistence type="inferred from homology"/>
<gene>
    <name evidence="1" type="primary">metK</name>
    <name type="ordered locus">Pmob_1383</name>
</gene>
<accession>A9BHX2</accession>
<name>METK_PETMO</name>
<sequence>MKKMLFTSESVTEGHPDKICDQISDTILDAILEKEPEENKMNARCAVETLVTRGLVVVTGEVRTSAYIDVPTLVRNTILDIGYNRAKFGFDGETCAVITSIEEQSPDIALGVDRSFEVKSKEKEDPFEKIGAGDQGIMFGYATNETDAYMPLPILLAHRLAKRLADVRKSNTLDFLRPDGKTQVTVEYDENNNPVGVETVLISAQHSPDISRQELEEAIKEHVITPVIPENLVTKDTKILVNPTGRFVIGGPQADTGLTGRKIIVDTYGGWAPHGGGAFSGKDPTKVDRSATYMARYVAKNLVASGAADEVLIQLSYAIGVAQPVSINIDTKGTAKVDEEKIYKVVKEIFDFRPAAIISNLNLLQPIYQKTAAYGHFGRKDVEFPWERLDKVKELKAALGL</sequence>